<protein>
    <recommendedName>
        <fullName evidence="1">Undecaprenyl-diphosphatase</fullName>
        <ecNumber evidence="1">3.6.1.27</ecNumber>
    </recommendedName>
    <alternativeName>
        <fullName evidence="1">Bacitracin resistance protein</fullName>
    </alternativeName>
    <alternativeName>
        <fullName evidence="1">Undecaprenyl pyrophosphate phosphatase</fullName>
    </alternativeName>
</protein>
<name>UPPP_CLOPS</name>
<dbReference type="EC" id="3.6.1.27" evidence="1"/>
<dbReference type="EMBL" id="CP000312">
    <property type="protein sequence ID" value="ABG85316.1"/>
    <property type="molecule type" value="Genomic_DNA"/>
</dbReference>
<dbReference type="RefSeq" id="WP_011592200.1">
    <property type="nucleotide sequence ID" value="NC_008262.1"/>
</dbReference>
<dbReference type="SMR" id="Q0STN1"/>
<dbReference type="KEGG" id="cpr:CPR_1204"/>
<dbReference type="Proteomes" id="UP000001824">
    <property type="component" value="Chromosome"/>
</dbReference>
<dbReference type="GO" id="GO:0005886">
    <property type="term" value="C:plasma membrane"/>
    <property type="evidence" value="ECO:0007669"/>
    <property type="project" value="UniProtKB-SubCell"/>
</dbReference>
<dbReference type="GO" id="GO:0050380">
    <property type="term" value="F:undecaprenyl-diphosphatase activity"/>
    <property type="evidence" value="ECO:0007669"/>
    <property type="project" value="UniProtKB-UniRule"/>
</dbReference>
<dbReference type="GO" id="GO:0071555">
    <property type="term" value="P:cell wall organization"/>
    <property type="evidence" value="ECO:0007669"/>
    <property type="project" value="UniProtKB-KW"/>
</dbReference>
<dbReference type="GO" id="GO:0009252">
    <property type="term" value="P:peptidoglycan biosynthetic process"/>
    <property type="evidence" value="ECO:0007669"/>
    <property type="project" value="UniProtKB-KW"/>
</dbReference>
<dbReference type="GO" id="GO:0008360">
    <property type="term" value="P:regulation of cell shape"/>
    <property type="evidence" value="ECO:0007669"/>
    <property type="project" value="UniProtKB-KW"/>
</dbReference>
<dbReference type="GO" id="GO:0046677">
    <property type="term" value="P:response to antibiotic"/>
    <property type="evidence" value="ECO:0007669"/>
    <property type="project" value="UniProtKB-UniRule"/>
</dbReference>
<dbReference type="HAMAP" id="MF_01006">
    <property type="entry name" value="Undec_diphosphatase"/>
    <property type="match status" value="1"/>
</dbReference>
<dbReference type="InterPro" id="IPR003824">
    <property type="entry name" value="UppP"/>
</dbReference>
<dbReference type="NCBIfam" id="NF001390">
    <property type="entry name" value="PRK00281.1-4"/>
    <property type="match status" value="1"/>
</dbReference>
<dbReference type="NCBIfam" id="TIGR00753">
    <property type="entry name" value="undec_PP_bacA"/>
    <property type="match status" value="1"/>
</dbReference>
<dbReference type="PANTHER" id="PTHR30622">
    <property type="entry name" value="UNDECAPRENYL-DIPHOSPHATASE"/>
    <property type="match status" value="1"/>
</dbReference>
<dbReference type="PANTHER" id="PTHR30622:SF3">
    <property type="entry name" value="UNDECAPRENYL-DIPHOSPHATASE"/>
    <property type="match status" value="1"/>
</dbReference>
<dbReference type="Pfam" id="PF02673">
    <property type="entry name" value="BacA"/>
    <property type="match status" value="1"/>
</dbReference>
<feature type="chain" id="PRO_0000290702" description="Undecaprenyl-diphosphatase">
    <location>
        <begin position="1"/>
        <end position="304"/>
    </location>
</feature>
<feature type="transmembrane region" description="Helical" evidence="1">
    <location>
        <begin position="5"/>
        <end position="25"/>
    </location>
</feature>
<feature type="transmembrane region" description="Helical" evidence="1">
    <location>
        <begin position="47"/>
        <end position="67"/>
    </location>
</feature>
<feature type="transmembrane region" description="Helical" evidence="1">
    <location>
        <begin position="72"/>
        <end position="92"/>
    </location>
</feature>
<feature type="transmembrane region" description="Helical" evidence="1">
    <location>
        <begin position="111"/>
        <end position="131"/>
    </location>
</feature>
<feature type="transmembrane region" description="Helical" evidence="1">
    <location>
        <begin position="137"/>
        <end position="157"/>
    </location>
</feature>
<feature type="transmembrane region" description="Helical" evidence="1">
    <location>
        <begin position="209"/>
        <end position="231"/>
    </location>
</feature>
<feature type="transmembrane region" description="Helical" evidence="1">
    <location>
        <begin position="248"/>
        <end position="268"/>
    </location>
</feature>
<feature type="transmembrane region" description="Helical" evidence="1">
    <location>
        <begin position="282"/>
        <end position="302"/>
    </location>
</feature>
<accession>Q0STN1</accession>
<sequence length="304" mass="33623">MGIDFLFILKALIIAIVEGLTEFVPVSSTGHMILVGDLIHFNTQSGGFPEMYEVVIQLGAILAVVVLYWRKISSSVVEFLSYIFSFIGLKASGDKRKYEKRLAESKTGFRFGINVIIGTIPAAILGLLFHDEIKEYLFSTKTVAIGFIVGGILLIVIENNFRKRAKRSKIVKDIDKMTYGQSLLVGCFQCLSLWPGMSRSASTIMGGWISGLSTTVATEFTFFLAIPAMVGASGLDLFKFDYSQMNATNLISLILGFIVAFIVSLVVIDKFINYLKKKPMRIFAIYRVFAGIVLAILIFTKVIS</sequence>
<reference key="1">
    <citation type="journal article" date="2006" name="Genome Res.">
        <title>Skewed genomic variability in strains of the toxigenic bacterial pathogen, Clostridium perfringens.</title>
        <authorList>
            <person name="Myers G.S.A."/>
            <person name="Rasko D.A."/>
            <person name="Cheung J.K."/>
            <person name="Ravel J."/>
            <person name="Seshadri R."/>
            <person name="DeBoy R.T."/>
            <person name="Ren Q."/>
            <person name="Varga J."/>
            <person name="Awad M.M."/>
            <person name="Brinkac L.M."/>
            <person name="Daugherty S.C."/>
            <person name="Haft D.H."/>
            <person name="Dodson R.J."/>
            <person name="Madupu R."/>
            <person name="Nelson W.C."/>
            <person name="Rosovitz M.J."/>
            <person name="Sullivan S.A."/>
            <person name="Khouri H."/>
            <person name="Dimitrov G.I."/>
            <person name="Watkins K.L."/>
            <person name="Mulligan S."/>
            <person name="Benton J."/>
            <person name="Radune D."/>
            <person name="Fisher D.J."/>
            <person name="Atkins H.S."/>
            <person name="Hiscox T."/>
            <person name="Jost B.H."/>
            <person name="Billington S.J."/>
            <person name="Songer J.G."/>
            <person name="McClane B.A."/>
            <person name="Titball R.W."/>
            <person name="Rood J.I."/>
            <person name="Melville S.B."/>
            <person name="Paulsen I.T."/>
        </authorList>
    </citation>
    <scope>NUCLEOTIDE SEQUENCE [LARGE SCALE GENOMIC DNA]</scope>
    <source>
        <strain>SM101 / Type A</strain>
    </source>
</reference>
<proteinExistence type="inferred from homology"/>
<organism>
    <name type="scientific">Clostridium perfringens (strain SM101 / Type A)</name>
    <dbReference type="NCBI Taxonomy" id="289380"/>
    <lineage>
        <taxon>Bacteria</taxon>
        <taxon>Bacillati</taxon>
        <taxon>Bacillota</taxon>
        <taxon>Clostridia</taxon>
        <taxon>Eubacteriales</taxon>
        <taxon>Clostridiaceae</taxon>
        <taxon>Clostridium</taxon>
    </lineage>
</organism>
<comment type="function">
    <text evidence="1">Catalyzes the dephosphorylation of undecaprenyl diphosphate (UPP). Confers resistance to bacitracin.</text>
</comment>
<comment type="catalytic activity">
    <reaction evidence="1">
        <text>di-trans,octa-cis-undecaprenyl diphosphate + H2O = di-trans,octa-cis-undecaprenyl phosphate + phosphate + H(+)</text>
        <dbReference type="Rhea" id="RHEA:28094"/>
        <dbReference type="ChEBI" id="CHEBI:15377"/>
        <dbReference type="ChEBI" id="CHEBI:15378"/>
        <dbReference type="ChEBI" id="CHEBI:43474"/>
        <dbReference type="ChEBI" id="CHEBI:58405"/>
        <dbReference type="ChEBI" id="CHEBI:60392"/>
        <dbReference type="EC" id="3.6.1.27"/>
    </reaction>
</comment>
<comment type="subcellular location">
    <subcellularLocation>
        <location evidence="1">Cell membrane</location>
        <topology evidence="1">Multi-pass membrane protein</topology>
    </subcellularLocation>
</comment>
<comment type="miscellaneous">
    <text>Bacitracin is thought to be involved in the inhibition of peptidoglycan synthesis by sequestering undecaprenyl diphosphate, thereby reducing the pool of lipid carrier available.</text>
</comment>
<comment type="similarity">
    <text evidence="1">Belongs to the UppP family.</text>
</comment>
<evidence type="ECO:0000255" key="1">
    <source>
        <dbReference type="HAMAP-Rule" id="MF_01006"/>
    </source>
</evidence>
<keyword id="KW-0046">Antibiotic resistance</keyword>
<keyword id="KW-1003">Cell membrane</keyword>
<keyword id="KW-0133">Cell shape</keyword>
<keyword id="KW-0961">Cell wall biogenesis/degradation</keyword>
<keyword id="KW-0378">Hydrolase</keyword>
<keyword id="KW-0472">Membrane</keyword>
<keyword id="KW-0573">Peptidoglycan synthesis</keyword>
<keyword id="KW-0812">Transmembrane</keyword>
<keyword id="KW-1133">Transmembrane helix</keyword>
<gene>
    <name evidence="1" type="primary">uppP</name>
    <name type="ordered locus">CPR_1204</name>
</gene>